<name>HIS52_CAMJR</name>
<sequence length="195" mass="21976">MKIIIIDTACANLASLKFCLDRLGFNATISRDLKELESADKLFLPGVGTAKEAMKNLEQFNLIDFIQNTKKPLLGICLGMQILGNFSEELNQETLKLIDFTTQKFKAKEGFTFPHMGWNEVYSSHALFKGLEGAYFYFVHSYCVGLGKYTIADCEYSQKFSASVMKDNFYGVQFHPERSSEAGEILISNFIKDIG</sequence>
<keyword id="KW-0028">Amino-acid biosynthesis</keyword>
<keyword id="KW-0963">Cytoplasm</keyword>
<keyword id="KW-0315">Glutamine amidotransferase</keyword>
<keyword id="KW-0368">Histidine biosynthesis</keyword>
<keyword id="KW-0378">Hydrolase</keyword>
<keyword id="KW-0456">Lyase</keyword>
<proteinExistence type="inferred from homology"/>
<dbReference type="EC" id="4.3.2.10" evidence="1"/>
<dbReference type="EC" id="3.5.1.2" evidence="1"/>
<dbReference type="EMBL" id="CP000025">
    <property type="protein sequence ID" value="AAW36196.1"/>
    <property type="molecule type" value="Genomic_DNA"/>
</dbReference>
<dbReference type="SMR" id="Q5HSJ1"/>
<dbReference type="KEGG" id="cjr:CJE1772"/>
<dbReference type="HOGENOM" id="CLU_071837_0_0_7"/>
<dbReference type="UniPathway" id="UPA00031">
    <property type="reaction ID" value="UER00010"/>
</dbReference>
<dbReference type="GO" id="GO:0005737">
    <property type="term" value="C:cytoplasm"/>
    <property type="evidence" value="ECO:0007669"/>
    <property type="project" value="UniProtKB-SubCell"/>
</dbReference>
<dbReference type="GO" id="GO:0004359">
    <property type="term" value="F:glutaminase activity"/>
    <property type="evidence" value="ECO:0007669"/>
    <property type="project" value="UniProtKB-EC"/>
</dbReference>
<dbReference type="GO" id="GO:0000107">
    <property type="term" value="F:imidazoleglycerol-phosphate synthase activity"/>
    <property type="evidence" value="ECO:0007669"/>
    <property type="project" value="UniProtKB-UniRule"/>
</dbReference>
<dbReference type="GO" id="GO:0016829">
    <property type="term" value="F:lyase activity"/>
    <property type="evidence" value="ECO:0007669"/>
    <property type="project" value="UniProtKB-KW"/>
</dbReference>
<dbReference type="GO" id="GO:0000105">
    <property type="term" value="P:L-histidine biosynthetic process"/>
    <property type="evidence" value="ECO:0007669"/>
    <property type="project" value="UniProtKB-UniRule"/>
</dbReference>
<dbReference type="CDD" id="cd01748">
    <property type="entry name" value="GATase1_IGP_Synthase"/>
    <property type="match status" value="1"/>
</dbReference>
<dbReference type="FunFam" id="3.40.50.880:FF:000009">
    <property type="entry name" value="Imidazole glycerol phosphate synthase subunit HisH"/>
    <property type="match status" value="1"/>
</dbReference>
<dbReference type="Gene3D" id="3.40.50.880">
    <property type="match status" value="1"/>
</dbReference>
<dbReference type="HAMAP" id="MF_00278">
    <property type="entry name" value="HisH"/>
    <property type="match status" value="1"/>
</dbReference>
<dbReference type="InterPro" id="IPR029062">
    <property type="entry name" value="Class_I_gatase-like"/>
</dbReference>
<dbReference type="InterPro" id="IPR017926">
    <property type="entry name" value="GATASE"/>
</dbReference>
<dbReference type="InterPro" id="IPR010139">
    <property type="entry name" value="Imidazole-glycPsynth_HisH"/>
</dbReference>
<dbReference type="NCBIfam" id="TIGR01855">
    <property type="entry name" value="IMP_synth_hisH"/>
    <property type="match status" value="1"/>
</dbReference>
<dbReference type="PANTHER" id="PTHR42701">
    <property type="entry name" value="IMIDAZOLE GLYCEROL PHOSPHATE SYNTHASE SUBUNIT HISH"/>
    <property type="match status" value="1"/>
</dbReference>
<dbReference type="PANTHER" id="PTHR42701:SF1">
    <property type="entry name" value="IMIDAZOLE GLYCEROL PHOSPHATE SYNTHASE SUBUNIT HISH"/>
    <property type="match status" value="1"/>
</dbReference>
<dbReference type="Pfam" id="PF00117">
    <property type="entry name" value="GATase"/>
    <property type="match status" value="1"/>
</dbReference>
<dbReference type="PIRSF" id="PIRSF000495">
    <property type="entry name" value="Amidotransf_hisH"/>
    <property type="match status" value="1"/>
</dbReference>
<dbReference type="SUPFAM" id="SSF52317">
    <property type="entry name" value="Class I glutamine amidotransferase-like"/>
    <property type="match status" value="1"/>
</dbReference>
<dbReference type="PROSITE" id="PS51273">
    <property type="entry name" value="GATASE_TYPE_1"/>
    <property type="match status" value="1"/>
</dbReference>
<reference key="1">
    <citation type="journal article" date="2005" name="PLoS Biol.">
        <title>Major structural differences and novel potential virulence mechanisms from the genomes of multiple Campylobacter species.</title>
        <authorList>
            <person name="Fouts D.E."/>
            <person name="Mongodin E.F."/>
            <person name="Mandrell R.E."/>
            <person name="Miller W.G."/>
            <person name="Rasko D.A."/>
            <person name="Ravel J."/>
            <person name="Brinkac L.M."/>
            <person name="DeBoy R.T."/>
            <person name="Parker C.T."/>
            <person name="Daugherty S.C."/>
            <person name="Dodson R.J."/>
            <person name="Durkin A.S."/>
            <person name="Madupu R."/>
            <person name="Sullivan S.A."/>
            <person name="Shetty J.U."/>
            <person name="Ayodeji M.A."/>
            <person name="Shvartsbeyn A."/>
            <person name="Schatz M.C."/>
            <person name="Badger J.H."/>
            <person name="Fraser C.M."/>
            <person name="Nelson K.E."/>
        </authorList>
    </citation>
    <scope>NUCLEOTIDE SEQUENCE [LARGE SCALE GENOMIC DNA]</scope>
    <source>
        <strain>RM1221</strain>
    </source>
</reference>
<accession>Q5HSJ1</accession>
<gene>
    <name evidence="1" type="primary">hisH2</name>
    <name type="ordered locus">CJE1772</name>
</gene>
<comment type="function">
    <text evidence="1">IGPS catalyzes the conversion of PRFAR and glutamine to IGP, AICAR and glutamate. The HisH subunit provides the glutamine amidotransferase activity that produces the ammonia necessary to HisF for the synthesis of IGP and AICAR.</text>
</comment>
<comment type="catalytic activity">
    <reaction evidence="1">
        <text>5-[(5-phospho-1-deoxy-D-ribulos-1-ylimino)methylamino]-1-(5-phospho-beta-D-ribosyl)imidazole-4-carboxamide + L-glutamine = D-erythro-1-(imidazol-4-yl)glycerol 3-phosphate + 5-amino-1-(5-phospho-beta-D-ribosyl)imidazole-4-carboxamide + L-glutamate + H(+)</text>
        <dbReference type="Rhea" id="RHEA:24793"/>
        <dbReference type="ChEBI" id="CHEBI:15378"/>
        <dbReference type="ChEBI" id="CHEBI:29985"/>
        <dbReference type="ChEBI" id="CHEBI:58278"/>
        <dbReference type="ChEBI" id="CHEBI:58359"/>
        <dbReference type="ChEBI" id="CHEBI:58475"/>
        <dbReference type="ChEBI" id="CHEBI:58525"/>
        <dbReference type="EC" id="4.3.2.10"/>
    </reaction>
</comment>
<comment type="catalytic activity">
    <reaction evidence="1">
        <text>L-glutamine + H2O = L-glutamate + NH4(+)</text>
        <dbReference type="Rhea" id="RHEA:15889"/>
        <dbReference type="ChEBI" id="CHEBI:15377"/>
        <dbReference type="ChEBI" id="CHEBI:28938"/>
        <dbReference type="ChEBI" id="CHEBI:29985"/>
        <dbReference type="ChEBI" id="CHEBI:58359"/>
        <dbReference type="EC" id="3.5.1.2"/>
    </reaction>
</comment>
<comment type="pathway">
    <text evidence="1">Amino-acid biosynthesis; L-histidine biosynthesis; L-histidine from 5-phospho-alpha-D-ribose 1-diphosphate: step 5/9.</text>
</comment>
<comment type="subunit">
    <text evidence="1">Heterodimer of HisH and HisF.</text>
</comment>
<comment type="subcellular location">
    <subcellularLocation>
        <location evidence="1">Cytoplasm</location>
    </subcellularLocation>
</comment>
<organism>
    <name type="scientific">Campylobacter jejuni (strain RM1221)</name>
    <dbReference type="NCBI Taxonomy" id="195099"/>
    <lineage>
        <taxon>Bacteria</taxon>
        <taxon>Pseudomonadati</taxon>
        <taxon>Campylobacterota</taxon>
        <taxon>Epsilonproteobacteria</taxon>
        <taxon>Campylobacterales</taxon>
        <taxon>Campylobacteraceae</taxon>
        <taxon>Campylobacter</taxon>
    </lineage>
</organism>
<feature type="chain" id="PRO_0000231714" description="Imidazole glycerol phosphate synthase subunit HisH 2">
    <location>
        <begin position="1"/>
        <end position="195"/>
    </location>
</feature>
<feature type="domain" description="Glutamine amidotransferase type-1" evidence="1">
    <location>
        <begin position="2"/>
        <end position="195"/>
    </location>
</feature>
<feature type="active site" description="Nucleophile" evidence="1">
    <location>
        <position position="77"/>
    </location>
</feature>
<feature type="active site" evidence="1">
    <location>
        <position position="175"/>
    </location>
</feature>
<feature type="active site" evidence="1">
    <location>
        <position position="177"/>
    </location>
</feature>
<protein>
    <recommendedName>
        <fullName evidence="1">Imidazole glycerol phosphate synthase subunit HisH 2</fullName>
        <ecNumber evidence="1">4.3.2.10</ecNumber>
    </recommendedName>
    <alternativeName>
        <fullName evidence="1">IGP synthase glutaminase subunit 2</fullName>
        <ecNumber evidence="1">3.5.1.2</ecNumber>
    </alternativeName>
    <alternativeName>
        <fullName evidence="1">IGP synthase subunit HisH 2</fullName>
    </alternativeName>
    <alternativeName>
        <fullName evidence="1">ImGP synthase subunit HisH 2</fullName>
        <shortName evidence="1">IGPS subunit HisH 2</shortName>
    </alternativeName>
</protein>
<evidence type="ECO:0000255" key="1">
    <source>
        <dbReference type="HAMAP-Rule" id="MF_00278"/>
    </source>
</evidence>